<gene>
    <name evidence="4" type="primary">SAL2</name>
    <name evidence="7" type="ordered locus">At5g64000</name>
    <name evidence="8" type="ORF">MBM17.10</name>
</gene>
<proteinExistence type="evidence at protein level"/>
<sequence length="347" mass="37509">MSYEKELAAAKKAVTLAARLSQEVQKTLLQSQVWKKSDRSPVTAADYGSQAVVSLVLERELQPDKLSLVAEEETGDLRKNGSEAFLEDIAKLVKDTLASEESYTSSPLSTDDVLNAIDCGKSEGGCKGSHWVLDPIDGTRGFVRGEQYAVGLALLVEGKVVLGVMACPNLPLASAVCATDNSSQEDVGCLFFATTGSGTYVQSLKGNSLPQKVQVSSNENLDEAKFLESYHKPIPIHGTIAKKLGIKALPVRIDSQAKYAALSRGDAEIYLRFTLNGYRECIWDHAPGSIITTEAGGVVCDATGKSLDFSKGKYLAHKTGIIVTTKKLKPWILKAVRESIEEENLYF</sequence>
<keyword id="KW-0106">Calcium</keyword>
<keyword id="KW-0378">Hydrolase</keyword>
<keyword id="KW-0452">Lithium</keyword>
<keyword id="KW-0460">Magnesium</keyword>
<keyword id="KW-0479">Metal-binding</keyword>
<keyword id="KW-0511">Multifunctional enzyme</keyword>
<keyword id="KW-1185">Reference proteome</keyword>
<dbReference type="EC" id="3.1.3.7" evidence="3"/>
<dbReference type="EC" id="3.1.3.57" evidence="3"/>
<dbReference type="EMBL" id="Z83312">
    <property type="protein sequence ID" value="CAB05889.1"/>
    <property type="molecule type" value="mRNA"/>
</dbReference>
<dbReference type="EMBL" id="AB019227">
    <property type="protein sequence ID" value="BAA96903.1"/>
    <property type="molecule type" value="Genomic_DNA"/>
</dbReference>
<dbReference type="EMBL" id="CP002688">
    <property type="protein sequence ID" value="AED97828.1"/>
    <property type="molecule type" value="Genomic_DNA"/>
</dbReference>
<dbReference type="EMBL" id="AY070383">
    <property type="protein sequence ID" value="AAL49879.1"/>
    <property type="molecule type" value="mRNA"/>
</dbReference>
<dbReference type="EMBL" id="AY096575">
    <property type="protein sequence ID" value="AAM20225.1"/>
    <property type="molecule type" value="mRNA"/>
</dbReference>
<dbReference type="RefSeq" id="NP_201205.1">
    <property type="nucleotide sequence ID" value="NM_125796.5"/>
</dbReference>
<dbReference type="SMR" id="O49623"/>
<dbReference type="FunCoup" id="O49623">
    <property type="interactions" value="309"/>
</dbReference>
<dbReference type="STRING" id="3702.O49623"/>
<dbReference type="PaxDb" id="3702-AT5G64000.1"/>
<dbReference type="ProteomicsDB" id="220402"/>
<dbReference type="EnsemblPlants" id="AT5G64000.1">
    <property type="protein sequence ID" value="AT5G64000.1"/>
    <property type="gene ID" value="AT5G64000"/>
</dbReference>
<dbReference type="GeneID" id="836521"/>
<dbReference type="Gramene" id="AT5G64000.1">
    <property type="protein sequence ID" value="AT5G64000.1"/>
    <property type="gene ID" value="AT5G64000"/>
</dbReference>
<dbReference type="KEGG" id="ath:AT5G64000"/>
<dbReference type="Araport" id="AT5G64000"/>
<dbReference type="TAIR" id="AT5G64000">
    <property type="gene designation" value="SAL2"/>
</dbReference>
<dbReference type="eggNOG" id="KOG1528">
    <property type="taxonomic scope" value="Eukaryota"/>
</dbReference>
<dbReference type="HOGENOM" id="CLU_033446_2_1_1"/>
<dbReference type="InParanoid" id="O49623"/>
<dbReference type="OMA" id="ETHNRNC"/>
<dbReference type="PhylomeDB" id="O49623"/>
<dbReference type="BioCyc" id="ARA:AT5G64000-MONOMER"/>
<dbReference type="UniPathway" id="UPA00944"/>
<dbReference type="PRO" id="PR:O49623"/>
<dbReference type="Proteomes" id="UP000006548">
    <property type="component" value="Chromosome 5"/>
</dbReference>
<dbReference type="ExpressionAtlas" id="O49623">
    <property type="expression patterns" value="baseline and differential"/>
</dbReference>
<dbReference type="GO" id="GO:0008441">
    <property type="term" value="F:3'(2'),5'-bisphosphate nucleotidase activity"/>
    <property type="evidence" value="ECO:0000314"/>
    <property type="project" value="TAIR"/>
</dbReference>
<dbReference type="GO" id="GO:0016312">
    <property type="term" value="F:inositol bisphosphate phosphatase activity"/>
    <property type="evidence" value="ECO:0000314"/>
    <property type="project" value="TAIR"/>
</dbReference>
<dbReference type="GO" id="GO:0004441">
    <property type="term" value="F:inositol-1,4-bisphosphate 1-phosphatase activity"/>
    <property type="evidence" value="ECO:0007669"/>
    <property type="project" value="UniProtKB-EC"/>
</dbReference>
<dbReference type="GO" id="GO:0046872">
    <property type="term" value="F:metal ion binding"/>
    <property type="evidence" value="ECO:0007669"/>
    <property type="project" value="UniProtKB-KW"/>
</dbReference>
<dbReference type="GO" id="GO:0006790">
    <property type="term" value="P:sulfur compound metabolic process"/>
    <property type="evidence" value="ECO:0007669"/>
    <property type="project" value="InterPro"/>
</dbReference>
<dbReference type="CDD" id="cd01517">
    <property type="entry name" value="PAP_phosphatase"/>
    <property type="match status" value="1"/>
</dbReference>
<dbReference type="FunFam" id="3.40.190.80:FF:000003">
    <property type="entry name" value="PAP-specific phosphatase HAL2-like"/>
    <property type="match status" value="1"/>
</dbReference>
<dbReference type="FunFam" id="3.30.540.10:FF:000016">
    <property type="entry name" value="SAL1 phosphatase"/>
    <property type="match status" value="1"/>
</dbReference>
<dbReference type="Gene3D" id="3.40.190.80">
    <property type="match status" value="1"/>
</dbReference>
<dbReference type="Gene3D" id="3.30.540.10">
    <property type="entry name" value="Fructose-1,6-Bisphosphatase, subunit A, domain 1"/>
    <property type="match status" value="1"/>
</dbReference>
<dbReference type="InterPro" id="IPR006239">
    <property type="entry name" value="DPNP"/>
</dbReference>
<dbReference type="InterPro" id="IPR020583">
    <property type="entry name" value="Inositol_monoP_metal-BS"/>
</dbReference>
<dbReference type="InterPro" id="IPR051090">
    <property type="entry name" value="Inositol_monoP_superfamily"/>
</dbReference>
<dbReference type="InterPro" id="IPR000760">
    <property type="entry name" value="Inositol_monophosphatase-like"/>
</dbReference>
<dbReference type="NCBIfam" id="TIGR01330">
    <property type="entry name" value="bisphos_HAL2"/>
    <property type="match status" value="1"/>
</dbReference>
<dbReference type="PANTHER" id="PTHR43200">
    <property type="entry name" value="PHOSPHATASE"/>
    <property type="match status" value="1"/>
</dbReference>
<dbReference type="PANTHER" id="PTHR43200:SF11">
    <property type="entry name" value="SAL2 PHOSPHATASE-RELATED"/>
    <property type="match status" value="1"/>
</dbReference>
<dbReference type="Pfam" id="PF00459">
    <property type="entry name" value="Inositol_P"/>
    <property type="match status" value="1"/>
</dbReference>
<dbReference type="SUPFAM" id="SSF56655">
    <property type="entry name" value="Carbohydrate phosphatase"/>
    <property type="match status" value="1"/>
</dbReference>
<dbReference type="PROSITE" id="PS00629">
    <property type="entry name" value="IMP_1"/>
    <property type="match status" value="1"/>
</dbReference>
<comment type="function">
    <text evidence="2 3">Phosphatase that converts adenosine 3'-phosphate 5'-phosphosulfate (PAPS) to adenosine 5'-phosphosulfate (APS) and 3'-phosphoadenosine 5'-phosphate (3'-PAP) to AMP (PubMed:10205895). May regulate the flux of sulfur in the sulfur-activation pathway by converting PAPS to APS (By similarity). Prevents both the toxicity of PAP on RNA processing enzymes as well as the product inhibition by PAP of sulfate conjugation. Is also able to hydrolyze inositol 1,4-bisphosphate (PubMed:10205895).</text>
</comment>
<comment type="catalytic activity">
    <reaction evidence="3">
        <text>adenosine 3',5'-bisphosphate + H2O = AMP + phosphate</text>
        <dbReference type="Rhea" id="RHEA:10040"/>
        <dbReference type="ChEBI" id="CHEBI:15377"/>
        <dbReference type="ChEBI" id="CHEBI:43474"/>
        <dbReference type="ChEBI" id="CHEBI:58343"/>
        <dbReference type="ChEBI" id="CHEBI:456215"/>
        <dbReference type="EC" id="3.1.3.7"/>
    </reaction>
    <physiologicalReaction direction="left-to-right" evidence="6">
        <dbReference type="Rhea" id="RHEA:10041"/>
    </physiologicalReaction>
</comment>
<comment type="catalytic activity">
    <reaction evidence="3">
        <text>3'-phosphoadenylyl sulfate + H2O = adenosine 5'-phosphosulfate + phosphate</text>
        <dbReference type="Rhea" id="RHEA:77639"/>
        <dbReference type="ChEBI" id="CHEBI:15377"/>
        <dbReference type="ChEBI" id="CHEBI:43474"/>
        <dbReference type="ChEBI" id="CHEBI:58243"/>
        <dbReference type="ChEBI" id="CHEBI:58339"/>
        <dbReference type="EC" id="3.1.3.7"/>
    </reaction>
    <physiologicalReaction direction="left-to-right" evidence="6">
        <dbReference type="Rhea" id="RHEA:77640"/>
    </physiologicalReaction>
</comment>
<comment type="catalytic activity">
    <reaction evidence="3">
        <text>1D-myo-inositol 1,4-bisphosphate + H2O = 1D-myo-inositol 4-phosphate + phosphate</text>
        <dbReference type="Rhea" id="RHEA:15553"/>
        <dbReference type="ChEBI" id="CHEBI:15377"/>
        <dbReference type="ChEBI" id="CHEBI:43474"/>
        <dbReference type="ChEBI" id="CHEBI:58282"/>
        <dbReference type="ChEBI" id="CHEBI:58469"/>
        <dbReference type="EC" id="3.1.3.57"/>
    </reaction>
    <physiologicalReaction direction="left-to-right" evidence="6">
        <dbReference type="Rhea" id="RHEA:15554"/>
    </physiologicalReaction>
</comment>
<comment type="cofactor">
    <cofactor evidence="3">
        <name>Mg(2+)</name>
        <dbReference type="ChEBI" id="CHEBI:18420"/>
    </cofactor>
</comment>
<comment type="activity regulation">
    <text evidence="3">Inhibited by Li(+) (IC(50)=10 mM), Na(+) (IC(50)=200 mM) and Ca(2+) (IC(50)=0.03 mM).</text>
</comment>
<comment type="biophysicochemical properties">
    <kinetics>
        <KM evidence="3">20 uM for adenosine 3',5'-bisphosphate</KM>
        <KM evidence="3">830 uM for 1D-myo-inositol 1,4-bisphosphate</KM>
    </kinetics>
</comment>
<comment type="pathway">
    <text evidence="5">Signal transduction; phosphatidylinositol signaling pathway.</text>
</comment>
<comment type="tissue specificity">
    <text evidence="3">Very low expression in roots, leaves, stems, flowers and siliques.</text>
</comment>
<comment type="miscellaneous">
    <text evidence="3">Substrate preference is 3'-phosphoadenosine 5'-phosphate (3'-PAP) &gt; adenosine 3'-phosphate 5'-phosphosulfate (PAPS) &gt;&gt; inositol 1,4-bisphosphate. No activity observed against 2'-PAP, 3' or 5'-AMP, inositol 1-phosphate and fructose-1,6-bisphosphate.</text>
</comment>
<comment type="similarity">
    <text evidence="5">Belongs to the inositol monophosphatase superfamily.</text>
</comment>
<name>DPNP2_ARATH</name>
<organism>
    <name type="scientific">Arabidopsis thaliana</name>
    <name type="common">Mouse-ear cress</name>
    <dbReference type="NCBI Taxonomy" id="3702"/>
    <lineage>
        <taxon>Eukaryota</taxon>
        <taxon>Viridiplantae</taxon>
        <taxon>Streptophyta</taxon>
        <taxon>Embryophyta</taxon>
        <taxon>Tracheophyta</taxon>
        <taxon>Spermatophyta</taxon>
        <taxon>Magnoliopsida</taxon>
        <taxon>eudicotyledons</taxon>
        <taxon>Gunneridae</taxon>
        <taxon>Pentapetalae</taxon>
        <taxon>rosids</taxon>
        <taxon>malvids</taxon>
        <taxon>Brassicales</taxon>
        <taxon>Brassicaceae</taxon>
        <taxon>Camelineae</taxon>
        <taxon>Arabidopsis</taxon>
    </lineage>
</organism>
<accession>O49623</accession>
<protein>
    <recommendedName>
        <fullName evidence="5">3',5'-bisphosphate nucleotidase 2</fullName>
        <ecNumber evidence="3">3.1.3.7</ecNumber>
    </recommendedName>
    <alternativeName>
        <fullName evidence="5">3',5'-bisphosphonucleoside 3'-phosphohydrolase 2</fullName>
    </alternativeName>
    <alternativeName>
        <fullName evidence="4">3'-phosphoadenosine-5'-phosphate phosphatase 2</fullName>
        <shortName evidence="4">PAP phosphatase 2</shortName>
        <shortName evidence="4">PAPase 2</shortName>
    </alternativeName>
    <alternativeName>
        <fullName evidence="5">DPNPase 2</fullName>
    </alternativeName>
    <alternativeName>
        <fullName evidence="5">Inositol polyphosphate 1-phosphatase 2</fullName>
        <shortName evidence="5">IPPase 2</shortName>
    </alternativeName>
    <alternativeName>
        <fullName evidence="5">Inositol-1,4-bisphosphate 1-phosphatase 2</fullName>
        <ecNumber evidence="3">3.1.3.57</ecNumber>
    </alternativeName>
    <alternativeName>
        <fullName evidence="4">Phosphatase SAL2</fullName>
    </alternativeName>
</protein>
<reference key="1">
    <citation type="journal article" date="1999" name="Plant J.">
        <title>The Arabidopsis HAL2-like gene family includes a novel sodium-sensitive phosphatase.</title>
        <authorList>
            <person name="Gil-Mascarell R."/>
            <person name="Lopez-Coronado J.M."/>
            <person name="Belles J.M."/>
            <person name="Serrano R."/>
            <person name="Rodriguez P.L."/>
        </authorList>
    </citation>
    <scope>NUCLEOTIDE SEQUENCE [MRNA]</scope>
    <scope>FUNCTION</scope>
    <scope>CATALYTIC ACTIVITY</scope>
    <scope>COFACTOR</scope>
    <scope>SUBSTRATE SPECIFICITY</scope>
    <scope>BIOPHYSICOCHEMICAL PROPERTIES</scope>
    <scope>ACTIVITY REGULATION</scope>
    <source>
        <strain>cv. Columbia</strain>
    </source>
</reference>
<reference key="2">
    <citation type="journal article" date="2000" name="DNA Res.">
        <title>Structural analysis of Arabidopsis thaliana chromosome 5. X. Sequence features of the regions of 3,076,755 bp covered by sixty P1 and TAC clones.</title>
        <authorList>
            <person name="Sato S."/>
            <person name="Nakamura Y."/>
            <person name="Kaneko T."/>
            <person name="Katoh T."/>
            <person name="Asamizu E."/>
            <person name="Kotani H."/>
            <person name="Tabata S."/>
        </authorList>
    </citation>
    <scope>NUCLEOTIDE SEQUENCE [LARGE SCALE GENOMIC DNA]</scope>
    <source>
        <strain>cv. Columbia</strain>
    </source>
</reference>
<reference key="3">
    <citation type="journal article" date="2017" name="Plant J.">
        <title>Araport11: a complete reannotation of the Arabidopsis thaliana reference genome.</title>
        <authorList>
            <person name="Cheng C.Y."/>
            <person name="Krishnakumar V."/>
            <person name="Chan A.P."/>
            <person name="Thibaud-Nissen F."/>
            <person name="Schobel S."/>
            <person name="Town C.D."/>
        </authorList>
    </citation>
    <scope>GENOME REANNOTATION</scope>
    <source>
        <strain>cv. Columbia</strain>
    </source>
</reference>
<reference key="4">
    <citation type="journal article" date="2003" name="Science">
        <title>Empirical analysis of transcriptional activity in the Arabidopsis genome.</title>
        <authorList>
            <person name="Yamada K."/>
            <person name="Lim J."/>
            <person name="Dale J.M."/>
            <person name="Chen H."/>
            <person name="Shinn P."/>
            <person name="Palm C.J."/>
            <person name="Southwick A.M."/>
            <person name="Wu H.C."/>
            <person name="Kim C.J."/>
            <person name="Nguyen M."/>
            <person name="Pham P.K."/>
            <person name="Cheuk R.F."/>
            <person name="Karlin-Newmann G."/>
            <person name="Liu S.X."/>
            <person name="Lam B."/>
            <person name="Sakano H."/>
            <person name="Wu T."/>
            <person name="Yu G."/>
            <person name="Miranda M."/>
            <person name="Quach H.L."/>
            <person name="Tripp M."/>
            <person name="Chang C.H."/>
            <person name="Lee J.M."/>
            <person name="Toriumi M.J."/>
            <person name="Chan M.M."/>
            <person name="Tang C.C."/>
            <person name="Onodera C.S."/>
            <person name="Deng J.M."/>
            <person name="Akiyama K."/>
            <person name="Ansari Y."/>
            <person name="Arakawa T."/>
            <person name="Banh J."/>
            <person name="Banno F."/>
            <person name="Bowser L."/>
            <person name="Brooks S.Y."/>
            <person name="Carninci P."/>
            <person name="Chao Q."/>
            <person name="Choy N."/>
            <person name="Enju A."/>
            <person name="Goldsmith A.D."/>
            <person name="Gurjal M."/>
            <person name="Hansen N.F."/>
            <person name="Hayashizaki Y."/>
            <person name="Johnson-Hopson C."/>
            <person name="Hsuan V.W."/>
            <person name="Iida K."/>
            <person name="Karnes M."/>
            <person name="Khan S."/>
            <person name="Koesema E."/>
            <person name="Ishida J."/>
            <person name="Jiang P.X."/>
            <person name="Jones T."/>
            <person name="Kawai J."/>
            <person name="Kamiya A."/>
            <person name="Meyers C."/>
            <person name="Nakajima M."/>
            <person name="Narusaka M."/>
            <person name="Seki M."/>
            <person name="Sakurai T."/>
            <person name="Satou M."/>
            <person name="Tamse R."/>
            <person name="Vaysberg M."/>
            <person name="Wallender E.K."/>
            <person name="Wong C."/>
            <person name="Yamamura Y."/>
            <person name="Yuan S."/>
            <person name="Shinozaki K."/>
            <person name="Davis R.W."/>
            <person name="Theologis A."/>
            <person name="Ecker J.R."/>
        </authorList>
    </citation>
    <scope>NUCLEOTIDE SEQUENCE [LARGE SCALE MRNA]</scope>
    <source>
        <strain>cv. Columbia</strain>
    </source>
</reference>
<evidence type="ECO:0000250" key="1">
    <source>
        <dbReference type="UniProtKB" id="P32179"/>
    </source>
</evidence>
<evidence type="ECO:0000250" key="2">
    <source>
        <dbReference type="UniProtKB" id="Q42546"/>
    </source>
</evidence>
<evidence type="ECO:0000269" key="3">
    <source>
    </source>
</evidence>
<evidence type="ECO:0000303" key="4">
    <source>
    </source>
</evidence>
<evidence type="ECO:0000305" key="5"/>
<evidence type="ECO:0000305" key="6">
    <source>
    </source>
</evidence>
<evidence type="ECO:0000312" key="7">
    <source>
        <dbReference type="Araport" id="AT5G64000"/>
    </source>
</evidence>
<evidence type="ECO:0000312" key="8">
    <source>
        <dbReference type="EMBL" id="BAA96903.1"/>
    </source>
</evidence>
<feature type="chain" id="PRO_0000142531" description="3',5'-bisphosphate nucleotidase 2">
    <location>
        <begin position="1"/>
        <end position="347"/>
    </location>
</feature>
<feature type="active site" description="Proton acceptor" evidence="1">
    <location>
        <position position="46"/>
    </location>
</feature>
<feature type="active site" description="Proton acceptor" evidence="1">
    <location>
        <position position="139"/>
    </location>
</feature>
<feature type="binding site" evidence="1">
    <location>
        <position position="71"/>
    </location>
    <ligand>
        <name>Mg(2+)</name>
        <dbReference type="ChEBI" id="CHEBI:18420"/>
        <label>1</label>
    </ligand>
</feature>
<feature type="binding site" evidence="1">
    <location>
        <position position="71"/>
    </location>
    <ligand>
        <name>Mg(2+)</name>
        <dbReference type="ChEBI" id="CHEBI:18420"/>
        <label>3</label>
    </ligand>
</feature>
<feature type="binding site" evidence="1">
    <location>
        <position position="134"/>
    </location>
    <ligand>
        <name>Mg(2+)</name>
        <dbReference type="ChEBI" id="CHEBI:18420"/>
        <label>1</label>
    </ligand>
</feature>
<feature type="binding site" evidence="1">
    <location>
        <position position="134"/>
    </location>
    <ligand>
        <name>Mg(2+)</name>
        <dbReference type="ChEBI" id="CHEBI:18420"/>
        <label>2</label>
    </ligand>
</feature>
<feature type="binding site" evidence="1">
    <location>
        <position position="136"/>
    </location>
    <ligand>
        <name>Mg(2+)</name>
        <dbReference type="ChEBI" id="CHEBI:18420"/>
        <label>1</label>
    </ligand>
</feature>
<feature type="binding site" evidence="1">
    <location>
        <position position="137"/>
    </location>
    <ligand>
        <name>Mg(2+)</name>
        <dbReference type="ChEBI" id="CHEBI:18420"/>
        <label>2</label>
    </ligand>
</feature>
<feature type="binding site" evidence="1">
    <location>
        <position position="139"/>
    </location>
    <ligand>
        <name>adenosine 3',5'-bisphosphate</name>
        <dbReference type="ChEBI" id="CHEBI:58343"/>
    </ligand>
</feature>
<feature type="binding site" evidence="1">
    <location>
        <position position="255"/>
    </location>
    <ligand>
        <name>adenosine 3',5'-bisphosphate</name>
        <dbReference type="ChEBI" id="CHEBI:58343"/>
    </ligand>
</feature>
<feature type="binding site" evidence="1">
    <location>
        <position position="255"/>
    </location>
    <ligand>
        <name>AMP</name>
        <dbReference type="ChEBI" id="CHEBI:456215"/>
    </ligand>
</feature>
<feature type="binding site" evidence="1">
    <location>
        <position position="258"/>
    </location>
    <ligand>
        <name>adenosine 3',5'-bisphosphate</name>
        <dbReference type="ChEBI" id="CHEBI:58343"/>
    </ligand>
</feature>
<feature type="binding site" evidence="1">
    <location>
        <position position="258"/>
    </location>
    <ligand>
        <name>AMP</name>
        <dbReference type="ChEBI" id="CHEBI:456215"/>
    </ligand>
</feature>
<feature type="binding site" evidence="1">
    <location>
        <position position="272"/>
    </location>
    <ligand>
        <name>adenosine 3',5'-bisphosphate</name>
        <dbReference type="ChEBI" id="CHEBI:58343"/>
    </ligand>
</feature>
<feature type="binding site" evidence="1">
    <location>
        <position position="272"/>
    </location>
    <ligand>
        <name>AMP</name>
        <dbReference type="ChEBI" id="CHEBI:456215"/>
    </ligand>
</feature>
<feature type="binding site" evidence="1">
    <location>
        <position position="284"/>
    </location>
    <ligand>
        <name>adenosine 3',5'-bisphosphate</name>
        <dbReference type="ChEBI" id="CHEBI:58343"/>
    </ligand>
</feature>
<feature type="binding site" evidence="1">
    <location>
        <position position="284"/>
    </location>
    <ligand>
        <name>AMP</name>
        <dbReference type="ChEBI" id="CHEBI:456215"/>
    </ligand>
</feature>
<feature type="binding site" evidence="1">
    <location>
        <position position="284"/>
    </location>
    <ligand>
        <name>Mg(2+)</name>
        <dbReference type="ChEBI" id="CHEBI:18420"/>
        <label>2</label>
    </ligand>
</feature>